<evidence type="ECO:0000255" key="1">
    <source>
        <dbReference type="HAMAP-Rule" id="MF_00240"/>
    </source>
</evidence>
<organism>
    <name type="scientific">Shewanella baltica (strain OS185)</name>
    <dbReference type="NCBI Taxonomy" id="402882"/>
    <lineage>
        <taxon>Bacteria</taxon>
        <taxon>Pseudomonadati</taxon>
        <taxon>Pseudomonadota</taxon>
        <taxon>Gammaproteobacteria</taxon>
        <taxon>Alteromonadales</taxon>
        <taxon>Shewanellaceae</taxon>
        <taxon>Shewanella</taxon>
    </lineage>
</organism>
<reference key="1">
    <citation type="submission" date="2007-07" db="EMBL/GenBank/DDBJ databases">
        <title>Complete sequence of chromosome of Shewanella baltica OS185.</title>
        <authorList>
            <consortium name="US DOE Joint Genome Institute"/>
            <person name="Copeland A."/>
            <person name="Lucas S."/>
            <person name="Lapidus A."/>
            <person name="Barry K."/>
            <person name="Glavina del Rio T."/>
            <person name="Dalin E."/>
            <person name="Tice H."/>
            <person name="Pitluck S."/>
            <person name="Sims D."/>
            <person name="Brettin T."/>
            <person name="Bruce D."/>
            <person name="Detter J.C."/>
            <person name="Han C."/>
            <person name="Schmutz J."/>
            <person name="Larimer F."/>
            <person name="Land M."/>
            <person name="Hauser L."/>
            <person name="Kyrpides N."/>
            <person name="Mikhailova N."/>
            <person name="Brettar I."/>
            <person name="Rodrigues J."/>
            <person name="Konstantinidis K."/>
            <person name="Tiedje J."/>
            <person name="Richardson P."/>
        </authorList>
    </citation>
    <scope>NUCLEOTIDE SEQUENCE [LARGE SCALE GENOMIC DNA]</scope>
    <source>
        <strain>OS185</strain>
    </source>
</reference>
<gene>
    <name evidence="1" type="primary">lolA</name>
    <name type="ordered locus">Shew185_2214</name>
</gene>
<name>LOLA_SHEB8</name>
<keyword id="KW-0143">Chaperone</keyword>
<keyword id="KW-0574">Periplasm</keyword>
<keyword id="KW-0653">Protein transport</keyword>
<keyword id="KW-0732">Signal</keyword>
<keyword id="KW-0813">Transport</keyword>
<accession>A6WNG4</accession>
<proteinExistence type="inferred from homology"/>
<feature type="signal peptide" evidence="1">
    <location>
        <begin position="1"/>
        <end position="22"/>
    </location>
</feature>
<feature type="chain" id="PRO_5000260863" description="Outer-membrane lipoprotein carrier protein">
    <location>
        <begin position="23"/>
        <end position="208"/>
    </location>
</feature>
<protein>
    <recommendedName>
        <fullName evidence="1">Outer-membrane lipoprotein carrier protein</fullName>
    </recommendedName>
</protein>
<sequence length="208" mass="23206">MKKRLCAVLLASPLLFSAAVFADDAQQLRDKLIGTASLKADFKQTVTDVNKKVIQTGSGIFALAYPNQFYWHLTQPDESQIVADGKDLWIYNPFAEEVVIMDFAEAINASPIALLVHRDDATWSQYSVTKQQDCYEIKPKAIDSGILSVKVCFKNAQLANFNVADDKGNLSQFDLSNQQAITDKDKALFSFVLPDNVDVDDQRRKTAH</sequence>
<dbReference type="EMBL" id="CP000753">
    <property type="protein sequence ID" value="ABS08353.1"/>
    <property type="molecule type" value="Genomic_DNA"/>
</dbReference>
<dbReference type="RefSeq" id="WP_011846837.1">
    <property type="nucleotide sequence ID" value="NC_009665.1"/>
</dbReference>
<dbReference type="SMR" id="A6WNG4"/>
<dbReference type="KEGG" id="sbm:Shew185_2214"/>
<dbReference type="HOGENOM" id="CLU_087560_1_1_6"/>
<dbReference type="GO" id="GO:0030288">
    <property type="term" value="C:outer membrane-bounded periplasmic space"/>
    <property type="evidence" value="ECO:0007669"/>
    <property type="project" value="TreeGrafter"/>
</dbReference>
<dbReference type="GO" id="GO:0044874">
    <property type="term" value="P:lipoprotein localization to outer membrane"/>
    <property type="evidence" value="ECO:0007669"/>
    <property type="project" value="UniProtKB-UniRule"/>
</dbReference>
<dbReference type="GO" id="GO:0042953">
    <property type="term" value="P:lipoprotein transport"/>
    <property type="evidence" value="ECO:0007669"/>
    <property type="project" value="InterPro"/>
</dbReference>
<dbReference type="CDD" id="cd16325">
    <property type="entry name" value="LolA"/>
    <property type="match status" value="1"/>
</dbReference>
<dbReference type="Gene3D" id="2.50.20.10">
    <property type="entry name" value="Lipoprotein localisation LolA/LolB/LppX"/>
    <property type="match status" value="1"/>
</dbReference>
<dbReference type="HAMAP" id="MF_00240">
    <property type="entry name" value="LolA"/>
    <property type="match status" value="1"/>
</dbReference>
<dbReference type="InterPro" id="IPR029046">
    <property type="entry name" value="LolA/LolB/LppX"/>
</dbReference>
<dbReference type="InterPro" id="IPR004564">
    <property type="entry name" value="OM_lipoprot_carrier_LolA-like"/>
</dbReference>
<dbReference type="InterPro" id="IPR018323">
    <property type="entry name" value="OM_lipoprot_carrier_LolA_Pbac"/>
</dbReference>
<dbReference type="NCBIfam" id="TIGR00547">
    <property type="entry name" value="lolA"/>
    <property type="match status" value="1"/>
</dbReference>
<dbReference type="PANTHER" id="PTHR35869">
    <property type="entry name" value="OUTER-MEMBRANE LIPOPROTEIN CARRIER PROTEIN"/>
    <property type="match status" value="1"/>
</dbReference>
<dbReference type="PANTHER" id="PTHR35869:SF1">
    <property type="entry name" value="OUTER-MEMBRANE LIPOPROTEIN CARRIER PROTEIN"/>
    <property type="match status" value="1"/>
</dbReference>
<dbReference type="Pfam" id="PF03548">
    <property type="entry name" value="LolA"/>
    <property type="match status" value="1"/>
</dbReference>
<dbReference type="SUPFAM" id="SSF89392">
    <property type="entry name" value="Prokaryotic lipoproteins and lipoprotein localization factors"/>
    <property type="match status" value="1"/>
</dbReference>
<comment type="function">
    <text evidence="1">Participates in the translocation of lipoproteins from the inner membrane to the outer membrane. Only forms a complex with a lipoprotein if the residue after the N-terminal Cys is not an aspartate (The Asp acts as a targeting signal to indicate that the lipoprotein should stay in the inner membrane).</text>
</comment>
<comment type="subunit">
    <text evidence="1">Monomer.</text>
</comment>
<comment type="subcellular location">
    <subcellularLocation>
        <location evidence="1">Periplasm</location>
    </subcellularLocation>
</comment>
<comment type="similarity">
    <text evidence="1">Belongs to the LolA family.</text>
</comment>